<comment type="function">
    <text evidence="1">Catalyzes the transfer of a dimethylallyl group onto the adenine at position 37 in tRNAs that read codons beginning with uridine, leading to the formation of N6-(dimethylallyl)adenosine (i(6)A).</text>
</comment>
<comment type="catalytic activity">
    <reaction evidence="1">
        <text>adenosine(37) in tRNA + dimethylallyl diphosphate = N(6)-dimethylallyladenosine(37) in tRNA + diphosphate</text>
        <dbReference type="Rhea" id="RHEA:26482"/>
        <dbReference type="Rhea" id="RHEA-COMP:10162"/>
        <dbReference type="Rhea" id="RHEA-COMP:10375"/>
        <dbReference type="ChEBI" id="CHEBI:33019"/>
        <dbReference type="ChEBI" id="CHEBI:57623"/>
        <dbReference type="ChEBI" id="CHEBI:74411"/>
        <dbReference type="ChEBI" id="CHEBI:74415"/>
        <dbReference type="EC" id="2.5.1.75"/>
    </reaction>
</comment>
<comment type="cofactor">
    <cofactor evidence="1">
        <name>Mg(2+)</name>
        <dbReference type="ChEBI" id="CHEBI:18420"/>
    </cofactor>
</comment>
<comment type="subunit">
    <text evidence="1">Monomer.</text>
</comment>
<comment type="similarity">
    <text evidence="1">Belongs to the IPP transferase family.</text>
</comment>
<proteinExistence type="inferred from homology"/>
<sequence>MFFEIALIGTTASGKTYIANTLAREFNAVVLSLDSLCVYKEINIASAKPSQDDLASIKYFGVNLLSVNEHFNVELFIREYQKAKEFALARNLPLIIVGGTGFYLKTMIDGLSEKTLESKSSLNNDEIYALLLNIDPNYKIEKNDTYRLKKWLGIYEQTREIPSEFLKRTQKTGVLKDIEIYELAWDKEILKKRIKTRTKEMLDNGLLDEAKILFSKFDHKLKALNSIGLKECKEYLDGEISFKELENLITIHTTQLAKRQRTFNKKFQSKALEFDKALATLRMKFSIEK</sequence>
<gene>
    <name evidence="1" type="primary">miaA</name>
    <name type="ordered locus">CJE0161</name>
</gene>
<reference key="1">
    <citation type="journal article" date="2005" name="PLoS Biol.">
        <title>Major structural differences and novel potential virulence mechanisms from the genomes of multiple Campylobacter species.</title>
        <authorList>
            <person name="Fouts D.E."/>
            <person name="Mongodin E.F."/>
            <person name="Mandrell R.E."/>
            <person name="Miller W.G."/>
            <person name="Rasko D.A."/>
            <person name="Ravel J."/>
            <person name="Brinkac L.M."/>
            <person name="DeBoy R.T."/>
            <person name="Parker C.T."/>
            <person name="Daugherty S.C."/>
            <person name="Dodson R.J."/>
            <person name="Durkin A.S."/>
            <person name="Madupu R."/>
            <person name="Sullivan S.A."/>
            <person name="Shetty J.U."/>
            <person name="Ayodeji M.A."/>
            <person name="Shvartsbeyn A."/>
            <person name="Schatz M.C."/>
            <person name="Badger J.H."/>
            <person name="Fraser C.M."/>
            <person name="Nelson K.E."/>
        </authorList>
    </citation>
    <scope>NUCLEOTIDE SEQUENCE [LARGE SCALE GENOMIC DNA]</scope>
    <source>
        <strain>RM1221</strain>
    </source>
</reference>
<keyword id="KW-0067">ATP-binding</keyword>
<keyword id="KW-0460">Magnesium</keyword>
<keyword id="KW-0547">Nucleotide-binding</keyword>
<keyword id="KW-0808">Transferase</keyword>
<keyword id="KW-0819">tRNA processing</keyword>
<accession>Q5HX00</accession>
<feature type="chain" id="PRO_1000020581" description="tRNA dimethylallyltransferase">
    <location>
        <begin position="1"/>
        <end position="289"/>
    </location>
</feature>
<feature type="region of interest" description="Interaction with substrate tRNA" evidence="1">
    <location>
        <begin position="34"/>
        <end position="37"/>
    </location>
</feature>
<feature type="binding site" evidence="1">
    <location>
        <begin position="9"/>
        <end position="16"/>
    </location>
    <ligand>
        <name>ATP</name>
        <dbReference type="ChEBI" id="CHEBI:30616"/>
    </ligand>
</feature>
<feature type="binding site" evidence="1">
    <location>
        <begin position="11"/>
        <end position="16"/>
    </location>
    <ligand>
        <name>substrate</name>
    </ligand>
</feature>
<feature type="site" description="Interaction with substrate tRNA" evidence="1">
    <location>
        <position position="100"/>
    </location>
</feature>
<dbReference type="EC" id="2.5.1.75" evidence="1"/>
<dbReference type="EMBL" id="CP000025">
    <property type="protein sequence ID" value="AAW34756.1"/>
    <property type="molecule type" value="Genomic_DNA"/>
</dbReference>
<dbReference type="RefSeq" id="WP_002851982.1">
    <property type="nucleotide sequence ID" value="NC_003912.7"/>
</dbReference>
<dbReference type="SMR" id="Q5HX00"/>
<dbReference type="KEGG" id="cjr:CJE0161"/>
<dbReference type="HOGENOM" id="CLU_032616_0_1_7"/>
<dbReference type="GO" id="GO:0005524">
    <property type="term" value="F:ATP binding"/>
    <property type="evidence" value="ECO:0007669"/>
    <property type="project" value="UniProtKB-UniRule"/>
</dbReference>
<dbReference type="GO" id="GO:0052381">
    <property type="term" value="F:tRNA dimethylallyltransferase activity"/>
    <property type="evidence" value="ECO:0007669"/>
    <property type="project" value="UniProtKB-UniRule"/>
</dbReference>
<dbReference type="GO" id="GO:0006400">
    <property type="term" value="P:tRNA modification"/>
    <property type="evidence" value="ECO:0007669"/>
    <property type="project" value="TreeGrafter"/>
</dbReference>
<dbReference type="Gene3D" id="1.10.20.140">
    <property type="match status" value="1"/>
</dbReference>
<dbReference type="Gene3D" id="3.40.50.300">
    <property type="entry name" value="P-loop containing nucleotide triphosphate hydrolases"/>
    <property type="match status" value="1"/>
</dbReference>
<dbReference type="HAMAP" id="MF_00185">
    <property type="entry name" value="IPP_trans"/>
    <property type="match status" value="1"/>
</dbReference>
<dbReference type="InterPro" id="IPR039657">
    <property type="entry name" value="Dimethylallyltransferase"/>
</dbReference>
<dbReference type="InterPro" id="IPR018022">
    <property type="entry name" value="IPT"/>
</dbReference>
<dbReference type="InterPro" id="IPR027417">
    <property type="entry name" value="P-loop_NTPase"/>
</dbReference>
<dbReference type="NCBIfam" id="TIGR00174">
    <property type="entry name" value="miaA"/>
    <property type="match status" value="1"/>
</dbReference>
<dbReference type="PANTHER" id="PTHR11088">
    <property type="entry name" value="TRNA DIMETHYLALLYLTRANSFERASE"/>
    <property type="match status" value="1"/>
</dbReference>
<dbReference type="PANTHER" id="PTHR11088:SF60">
    <property type="entry name" value="TRNA DIMETHYLALLYLTRANSFERASE"/>
    <property type="match status" value="1"/>
</dbReference>
<dbReference type="Pfam" id="PF01715">
    <property type="entry name" value="IPPT"/>
    <property type="match status" value="1"/>
</dbReference>
<dbReference type="SUPFAM" id="SSF52540">
    <property type="entry name" value="P-loop containing nucleoside triphosphate hydrolases"/>
    <property type="match status" value="1"/>
</dbReference>
<protein>
    <recommendedName>
        <fullName evidence="1">tRNA dimethylallyltransferase</fullName>
        <ecNumber evidence="1">2.5.1.75</ecNumber>
    </recommendedName>
    <alternativeName>
        <fullName evidence="1">Dimethylallyl diphosphate:tRNA dimethylallyltransferase</fullName>
        <shortName evidence="1">DMAPP:tRNA dimethylallyltransferase</shortName>
        <shortName evidence="1">DMATase</shortName>
    </alternativeName>
    <alternativeName>
        <fullName evidence="1">Isopentenyl-diphosphate:tRNA isopentenyltransferase</fullName>
        <shortName evidence="1">IPP transferase</shortName>
        <shortName evidence="1">IPPT</shortName>
        <shortName evidence="1">IPTase</shortName>
    </alternativeName>
</protein>
<name>MIAA_CAMJR</name>
<organism>
    <name type="scientific">Campylobacter jejuni (strain RM1221)</name>
    <dbReference type="NCBI Taxonomy" id="195099"/>
    <lineage>
        <taxon>Bacteria</taxon>
        <taxon>Pseudomonadati</taxon>
        <taxon>Campylobacterota</taxon>
        <taxon>Epsilonproteobacteria</taxon>
        <taxon>Campylobacterales</taxon>
        <taxon>Campylobacteraceae</taxon>
        <taxon>Campylobacter</taxon>
    </lineage>
</organism>
<evidence type="ECO:0000255" key="1">
    <source>
        <dbReference type="HAMAP-Rule" id="MF_00185"/>
    </source>
</evidence>